<comment type="function">
    <text evidence="2">This protein is located at the 30S-50S ribosomal subunit interface and may play a role in the structure and function of the aminoacyl-tRNA binding site.</text>
</comment>
<comment type="similarity">
    <text evidence="2">Belongs to the bacterial ribosomal protein bL19 family.</text>
</comment>
<gene>
    <name evidence="2" type="primary">rplS</name>
    <name type="ordered locus">VV1_1618</name>
</gene>
<sequence>MSNIIKALEQEQMKQDLPKFAPGDTVVVQVKVKEGNRERLQAYEGVVIAIRNRGLHSAFTVRKISNGEGVERTFQTHSPVVDSIEVKRRGAVRRAKLYYLRERSGKSARIKEKLAKK</sequence>
<proteinExistence type="inferred from homology"/>
<feature type="initiator methionine" description="Removed" evidence="1">
    <location>
        <position position="1"/>
    </location>
</feature>
<feature type="chain" id="PRO_0000163567" description="Large ribosomal subunit protein bL19">
    <location>
        <begin position="2"/>
        <end position="117"/>
    </location>
</feature>
<keyword id="KW-0687">Ribonucleoprotein</keyword>
<keyword id="KW-0689">Ribosomal protein</keyword>
<dbReference type="EMBL" id="AE016795">
    <property type="protein sequence ID" value="AAO10037.1"/>
    <property type="molecule type" value="Genomic_DNA"/>
</dbReference>
<dbReference type="RefSeq" id="WP_011079544.1">
    <property type="nucleotide sequence ID" value="NC_004459.3"/>
</dbReference>
<dbReference type="SMR" id="Q8DC31"/>
<dbReference type="GeneID" id="93895875"/>
<dbReference type="KEGG" id="vvu:VV1_1618"/>
<dbReference type="HOGENOM" id="CLU_103507_2_1_6"/>
<dbReference type="Proteomes" id="UP000002275">
    <property type="component" value="Chromosome 1"/>
</dbReference>
<dbReference type="GO" id="GO:0022625">
    <property type="term" value="C:cytosolic large ribosomal subunit"/>
    <property type="evidence" value="ECO:0007669"/>
    <property type="project" value="TreeGrafter"/>
</dbReference>
<dbReference type="GO" id="GO:0003735">
    <property type="term" value="F:structural constituent of ribosome"/>
    <property type="evidence" value="ECO:0007669"/>
    <property type="project" value="InterPro"/>
</dbReference>
<dbReference type="GO" id="GO:0006412">
    <property type="term" value="P:translation"/>
    <property type="evidence" value="ECO:0007669"/>
    <property type="project" value="UniProtKB-UniRule"/>
</dbReference>
<dbReference type="FunFam" id="2.30.30.790:FF:000001">
    <property type="entry name" value="50S ribosomal protein L19"/>
    <property type="match status" value="1"/>
</dbReference>
<dbReference type="Gene3D" id="2.30.30.790">
    <property type="match status" value="1"/>
</dbReference>
<dbReference type="HAMAP" id="MF_00402">
    <property type="entry name" value="Ribosomal_bL19"/>
    <property type="match status" value="1"/>
</dbReference>
<dbReference type="InterPro" id="IPR001857">
    <property type="entry name" value="Ribosomal_bL19"/>
</dbReference>
<dbReference type="InterPro" id="IPR018257">
    <property type="entry name" value="Ribosomal_bL19_CS"/>
</dbReference>
<dbReference type="InterPro" id="IPR038657">
    <property type="entry name" value="Ribosomal_bL19_sf"/>
</dbReference>
<dbReference type="InterPro" id="IPR008991">
    <property type="entry name" value="Translation_prot_SH3-like_sf"/>
</dbReference>
<dbReference type="NCBIfam" id="TIGR01024">
    <property type="entry name" value="rplS_bact"/>
    <property type="match status" value="1"/>
</dbReference>
<dbReference type="PANTHER" id="PTHR15680:SF9">
    <property type="entry name" value="LARGE RIBOSOMAL SUBUNIT PROTEIN BL19M"/>
    <property type="match status" value="1"/>
</dbReference>
<dbReference type="PANTHER" id="PTHR15680">
    <property type="entry name" value="RIBOSOMAL PROTEIN L19"/>
    <property type="match status" value="1"/>
</dbReference>
<dbReference type="Pfam" id="PF01245">
    <property type="entry name" value="Ribosomal_L19"/>
    <property type="match status" value="1"/>
</dbReference>
<dbReference type="PIRSF" id="PIRSF002191">
    <property type="entry name" value="Ribosomal_L19"/>
    <property type="match status" value="1"/>
</dbReference>
<dbReference type="PRINTS" id="PR00061">
    <property type="entry name" value="RIBOSOMALL19"/>
</dbReference>
<dbReference type="SUPFAM" id="SSF50104">
    <property type="entry name" value="Translation proteins SH3-like domain"/>
    <property type="match status" value="1"/>
</dbReference>
<dbReference type="PROSITE" id="PS01015">
    <property type="entry name" value="RIBOSOMAL_L19"/>
    <property type="match status" value="1"/>
</dbReference>
<accession>Q8DC31</accession>
<name>RL19_VIBVU</name>
<reference key="1">
    <citation type="submission" date="2002-12" db="EMBL/GenBank/DDBJ databases">
        <title>Complete genome sequence of Vibrio vulnificus CMCP6.</title>
        <authorList>
            <person name="Rhee J.H."/>
            <person name="Kim S.Y."/>
            <person name="Chung S.S."/>
            <person name="Kim J.J."/>
            <person name="Moon Y.H."/>
            <person name="Jeong H."/>
            <person name="Choy H.E."/>
        </authorList>
    </citation>
    <scope>NUCLEOTIDE SEQUENCE [LARGE SCALE GENOMIC DNA]</scope>
    <source>
        <strain>CMCP6</strain>
    </source>
</reference>
<protein>
    <recommendedName>
        <fullName evidence="2">Large ribosomal subunit protein bL19</fullName>
    </recommendedName>
    <alternativeName>
        <fullName evidence="3">50S ribosomal protein L19</fullName>
    </alternativeName>
</protein>
<evidence type="ECO:0000250" key="1"/>
<evidence type="ECO:0000255" key="2">
    <source>
        <dbReference type="HAMAP-Rule" id="MF_00402"/>
    </source>
</evidence>
<evidence type="ECO:0000305" key="3"/>
<organism>
    <name type="scientific">Vibrio vulnificus (strain CMCP6)</name>
    <dbReference type="NCBI Taxonomy" id="216895"/>
    <lineage>
        <taxon>Bacteria</taxon>
        <taxon>Pseudomonadati</taxon>
        <taxon>Pseudomonadota</taxon>
        <taxon>Gammaproteobacteria</taxon>
        <taxon>Vibrionales</taxon>
        <taxon>Vibrionaceae</taxon>
        <taxon>Vibrio</taxon>
    </lineage>
</organism>